<sequence length="99" mass="11025">MKVSAALLCLLLIAATFIPQGLAQPDAINAPVTCCYNFTNRKISVQRLASYRRITSSKCPKEAVIFKTIVAKEICADPKQKWVQDSMDHLDKQTQTPKT</sequence>
<feature type="signal peptide" evidence="11">
    <location>
        <begin position="1"/>
        <end position="23"/>
    </location>
</feature>
<feature type="chain" id="PRO_0000005146" description="C-C motif chemokine 2">
    <location>
        <begin position="24"/>
        <end position="99"/>
    </location>
</feature>
<feature type="site" description="Involved in dimerization">
    <location>
        <position position="31"/>
    </location>
</feature>
<feature type="site" description="Involved in dimerization, receptor binding and signaling">
    <location>
        <position position="36"/>
    </location>
</feature>
<feature type="site" description="Involved in GAG binding">
    <location>
        <position position="41"/>
    </location>
</feature>
<feature type="site" description="Involved in GAG binding">
    <location>
        <position position="42"/>
    </location>
</feature>
<feature type="site" description="Involved in GAG binding and receptor binding">
    <location>
        <position position="47"/>
    </location>
</feature>
<feature type="site" description="Involved in dimerization">
    <location>
        <position position="58"/>
    </location>
</feature>
<feature type="site" description="Involved in dimerization">
    <location>
        <position position="61"/>
    </location>
</feature>
<feature type="site" description="Involved in GAG binding and receptor binding">
    <location>
        <position position="72"/>
    </location>
</feature>
<feature type="site" description="Involved in GAG binding">
    <location>
        <position position="81"/>
    </location>
</feature>
<feature type="site" description="Involved in GAG binding">
    <location>
        <position position="89"/>
    </location>
</feature>
<feature type="modified residue" description="Pyrrolidone carboxylic acid" evidence="6 11">
    <location>
        <position position="24"/>
    </location>
</feature>
<feature type="glycosylation site" description="N-linked (GlcNAc...) asparagine" evidence="1">
    <location>
        <position position="37"/>
    </location>
</feature>
<feature type="disulfide bond">
    <location>
        <begin position="34"/>
        <end position="59"/>
    </location>
</feature>
<feature type="disulfide bond">
    <location>
        <begin position="35"/>
        <end position="75"/>
    </location>
</feature>
<feature type="mutagenesis site" description="83% reduction in activity.">
    <location>
        <begin position="24"/>
        <end position="91"/>
    </location>
</feature>
<feature type="mutagenesis site" description="90% reduction in activity.">
    <location>
        <begin position="24"/>
        <end position="85"/>
    </location>
</feature>
<feature type="mutagenesis site" description="Loss of activity.">
    <location>
        <position position="24"/>
    </location>
</feature>
<feature type="mutagenesis site" description="Loss of signaling." evidence="3">
    <location>
        <begin position="25"/>
        <end position="31"/>
    </location>
</feature>
<feature type="mutagenesis site" description="Reduction in activity." evidence="3">
    <original>D</original>
    <variation>A</variation>
    <location>
        <position position="26"/>
    </location>
</feature>
<feature type="mutagenesis site" description="Slight reduction in activity." evidence="3">
    <original>I</original>
    <variation>A</variation>
    <location>
        <position position="28"/>
    </location>
</feature>
<feature type="mutagenesis site" description="50% reduction in activity." evidence="3">
    <original>N</original>
    <variation>A</variation>
    <location>
        <position position="29"/>
    </location>
</feature>
<feature type="mutagenesis site" description="Loss of dimerization; slight reduction of activity." evidence="3 21">
    <original>P</original>
    <variation>A</variation>
    <location>
        <position position="31"/>
    </location>
</feature>
<feature type="mutagenesis site" description="Slight reduction in activity." evidence="3 21">
    <original>V</original>
    <variation>A</variation>
    <location>
        <position position="32"/>
    </location>
</feature>
<feature type="mutagenesis site" description="Slight reduction in affinity." evidence="3 21">
    <original>V</original>
    <variation>E</variation>
    <location>
        <position position="32"/>
    </location>
</feature>
<feature type="mutagenesis site" description="Slight reduction in activity." evidence="3 21">
    <original>T</original>
    <variation>A</variation>
    <location>
        <position position="33"/>
    </location>
</feature>
<feature type="mutagenesis site" description="Slight reduction in affinity." evidence="3 21">
    <original>T</original>
    <variation>E</variation>
    <location>
        <position position="33"/>
    </location>
</feature>
<feature type="mutagenesis site" description="Loss of activity." evidence="21">
    <original>Y</original>
    <variation>A</variation>
    <location>
        <position position="36"/>
    </location>
</feature>
<feature type="mutagenesis site" description="Abolishes binding to Link domain of TNFAIP6." evidence="12">
    <original>RK</original>
    <variation>AA</variation>
    <location>
        <begin position="41"/>
        <end position="42"/>
    </location>
</feature>
<feature type="mutagenesis site" description="95% reduction in activity; strong reduction of receptor binding.">
    <original>R</original>
    <variation>F</variation>
    <location>
        <position position="47"/>
    </location>
</feature>
<feature type="mutagenesis site" description="40% reduction in activity.">
    <original>S</original>
    <variation>Q</variation>
    <location>
        <position position="50"/>
    </location>
</feature>
<feature type="mutagenesis site" description="Loss of activity.">
    <original>Y</original>
    <variation>D</variation>
    <location>
        <position position="51"/>
    </location>
</feature>
<feature type="mutagenesis site" description="Loss of activity.">
    <original>R</original>
    <variation>L</variation>
    <location>
        <position position="53"/>
    </location>
</feature>
<feature type="mutagenesis site" description="No effect on heparin binding.">
    <original>K</original>
    <variation>A</variation>
    <location>
        <position position="79"/>
    </location>
</feature>
<feature type="mutagenesis site" description="Strongly reduces heparin binding." evidence="20">
    <original>K</original>
    <variation>A</variation>
    <location>
        <position position="81"/>
    </location>
</feature>
<feature type="mutagenesis site" description="Strongly reduces heparin binding." evidence="20">
    <original>H</original>
    <variation>A</variation>
    <location>
        <position position="89"/>
    </location>
</feature>
<feature type="mutagenesis site" description="90% reduction in activity.">
    <original>D</original>
    <variation>L</variation>
    <location>
        <position position="91"/>
    </location>
</feature>
<feature type="mutagenesis site" description="No effect on heparin binding." evidence="20">
    <location>
        <begin position="95"/>
        <end position="99"/>
    </location>
</feature>
<feature type="helix" evidence="23">
    <location>
        <begin position="25"/>
        <end position="29"/>
    </location>
</feature>
<feature type="strand" evidence="23">
    <location>
        <begin position="32"/>
        <end position="34"/>
    </location>
</feature>
<feature type="helix" evidence="25">
    <location>
        <begin position="45"/>
        <end position="47"/>
    </location>
</feature>
<feature type="strand" evidence="25">
    <location>
        <begin position="48"/>
        <end position="54"/>
    </location>
</feature>
<feature type="strand" evidence="25">
    <location>
        <begin position="59"/>
        <end position="61"/>
    </location>
</feature>
<feature type="strand" evidence="25">
    <location>
        <begin position="63"/>
        <end position="68"/>
    </location>
</feature>
<feature type="strand" evidence="25">
    <location>
        <begin position="73"/>
        <end position="76"/>
    </location>
</feature>
<feature type="strand" evidence="24">
    <location>
        <begin position="78"/>
        <end position="80"/>
    </location>
</feature>
<feature type="helix" evidence="25">
    <location>
        <begin position="81"/>
        <end position="95"/>
    </location>
</feature>
<gene>
    <name type="primary">CCL2</name>
    <name type="synonym">MCP1</name>
    <name type="synonym">SCYA2</name>
</gene>
<organism>
    <name type="scientific">Homo sapiens</name>
    <name type="common">Human</name>
    <dbReference type="NCBI Taxonomy" id="9606"/>
    <lineage>
        <taxon>Eukaryota</taxon>
        <taxon>Metazoa</taxon>
        <taxon>Chordata</taxon>
        <taxon>Craniata</taxon>
        <taxon>Vertebrata</taxon>
        <taxon>Euteleostomi</taxon>
        <taxon>Mammalia</taxon>
        <taxon>Eutheria</taxon>
        <taxon>Euarchontoglires</taxon>
        <taxon>Primates</taxon>
        <taxon>Haplorrhini</taxon>
        <taxon>Catarrhini</taxon>
        <taxon>Hominidae</taxon>
        <taxon>Homo</taxon>
    </lineage>
</organism>
<name>CCL2_HUMAN</name>
<keyword id="KW-0002">3D-structure</keyword>
<keyword id="KW-0145">Chemotaxis</keyword>
<keyword id="KW-0202">Cytokine</keyword>
<keyword id="KW-0903">Direct protein sequencing</keyword>
<keyword id="KW-1015">Disulfide bond</keyword>
<keyword id="KW-0325">Glycoprotein</keyword>
<keyword id="KW-0395">Inflammatory response</keyword>
<keyword id="KW-1267">Proteomics identification</keyword>
<keyword id="KW-0873">Pyrrolidone carboxylic acid</keyword>
<keyword id="KW-1185">Reference proteome</keyword>
<keyword id="KW-0964">Secreted</keyword>
<keyword id="KW-0732">Signal</keyword>
<comment type="function">
    <text evidence="2 3 15 16 17 20 21">Acts as a ligand for C-C chemokine receptor CCR2 (PubMed:10529171, PubMed:10587439, PubMed:9837883). Signals through binding and activation of CCR2 and induces a strong chemotactic response and mobilization of intracellular calcium ions (PubMed:10587439, PubMed:9837883). Exhibits a chemotactic activity for monocytes and basophils but not neutrophils or eosinophils (PubMed:8195247, PubMed:8627182, PubMed:9792674). May be involved in the recruitment of monocytes into the arterial wall during the disease process of atherosclerosis (PubMed:8107690).</text>
</comment>
<comment type="subunit">
    <text evidence="4 12 18 19 20 21">Monomer or homodimer; in equilibrium (PubMed:15033992, PubMed:8898111, PubMed:8989326, PubMed:9837883). Is tethered on endothelial cells by glycosaminoglycan (GAG) side chains of proteoglycans (PubMed:9792674). Interacts with TNFAIP6 (via Link domain).</text>
</comment>
<comment type="interaction">
    <interactant intactId="EBI-1034732">
        <id>P13500</id>
    </interactant>
    <interactant intactId="EBI-2848366">
        <id>P13501</id>
        <label>CCL5</label>
    </interactant>
    <organismsDiffer>false</organismsDiffer>
    <experiments>2</experiments>
</comment>
<comment type="interaction">
    <interactant intactId="EBI-1034732">
        <id>P13500</id>
    </interactant>
    <interactant intactId="EBI-16803830">
        <id>P80075</id>
        <label>CCL8</label>
    </interactant>
    <organismsDiffer>false</organismsDiffer>
    <experiments>2</experiments>
</comment>
<comment type="interaction">
    <interactant intactId="EBI-1034732">
        <id>P13500</id>
    </interactant>
    <interactant intactId="EBI-2565740">
        <id>P02776</id>
        <label>PF4</label>
    </interactant>
    <organismsDiffer>false</organismsDiffer>
    <experiments>2</experiments>
</comment>
<comment type="interaction">
    <interactant intactId="EBI-1034732">
        <id>P13500</id>
    </interactant>
    <interactant intactId="EBI-2340927">
        <id>P78317</id>
        <label>RNF4</label>
    </interactant>
    <organismsDiffer>false</organismsDiffer>
    <experiments>3</experiments>
</comment>
<comment type="interaction">
    <interactant intactId="EBI-1034732">
        <id>P13500</id>
    </interactant>
    <interactant intactId="EBI-6447886">
        <id>Q9Y320</id>
        <label>TMX2</label>
    </interactant>
    <organismsDiffer>false</organismsDiffer>
    <experiments>3</experiments>
</comment>
<comment type="interaction">
    <interactant intactId="EBI-1034732">
        <id>P13500</id>
    </interactant>
    <interactant intactId="EBI-16161937">
        <id>Q2F862</id>
    </interactant>
    <organismsDiffer>true</organismsDiffer>
    <experiments>5</experiments>
</comment>
<comment type="interaction">
    <interactant intactId="EBI-11711396">
        <id>PRO_0000005146</id>
    </interactant>
    <interactant intactId="EBI-11700693">
        <id>P98066</id>
        <label>TNFAIP6</label>
    </interactant>
    <organismsDiffer>false</organismsDiffer>
    <experiments>2</experiments>
</comment>
<comment type="subcellular location">
    <subcellularLocation>
        <location evidence="9 10">Secreted</location>
    </subcellularLocation>
</comment>
<comment type="tissue specificity">
    <text evidence="8 10">Expressed in the seminal plasma, endometrial fluid and follicular fluid (at protein level) (PubMed:23765988). Expressed in monocytes (PubMed:2513477).</text>
</comment>
<comment type="induction">
    <text evidence="7 9 13 14">Up-regulated upon hypertonic conditions (PubMed:23233732). In pancreatic islets, secretion is stimulated by IL1B (PubMed:23955712). Up-regulated by coagulation factor Xa (F10) in PAR-1 (F2R)-dependent manner in cardiac fibroblasts and endothelial cells (PubMed:30568593, PubMed:34831181). Up-regulated by thrombin (F2) in endothelial cells (PubMed:30568593).</text>
</comment>
<comment type="PTM">
    <text evidence="17">Processing at the N-terminus can regulate receptor and target cell selectivity (PubMed:8627182). Deletion of the N-terminal residue converts it from an activator of basophil to an eosinophil chemoattractant (PubMed:8627182).</text>
</comment>
<comment type="PTM">
    <text evidence="10">N-Glycosylated.</text>
</comment>
<comment type="polymorphism">
    <text evidence="5">Genetic variations in CCL2 determine Mycobacterium tuberculosis susceptibility [MIM:607948].</text>
</comment>
<comment type="similarity">
    <text evidence="22">Belongs to the intercrine beta (chemokine CC) family.</text>
</comment>
<comment type="online information" name="Wikipedia">
    <link uri="https://en.wikipedia.org/wiki/CCL2"/>
    <text>CCL2 entry</text>
</comment>
<dbReference type="EMBL" id="M24545">
    <property type="protein sequence ID" value="AAA18164.1"/>
    <property type="molecule type" value="mRNA"/>
</dbReference>
<dbReference type="EMBL" id="M28225">
    <property type="protein sequence ID" value="AAA60308.1"/>
    <property type="molecule type" value="Genomic_DNA"/>
</dbReference>
<dbReference type="EMBL" id="M28223">
    <property type="protein sequence ID" value="AAA60308.1"/>
    <property type="status" value="JOINED"/>
    <property type="molecule type" value="Genomic_DNA"/>
</dbReference>
<dbReference type="EMBL" id="M28224">
    <property type="protein sequence ID" value="AAA60308.1"/>
    <property type="status" value="JOINED"/>
    <property type="molecule type" value="Genomic_DNA"/>
</dbReference>
<dbReference type="EMBL" id="M28226">
    <property type="protein sequence ID" value="AAA60309.1"/>
    <property type="molecule type" value="mRNA"/>
</dbReference>
<dbReference type="EMBL" id="M31626">
    <property type="protein sequence ID" value="AAA36330.1"/>
    <property type="molecule type" value="Genomic_DNA"/>
</dbReference>
<dbReference type="EMBL" id="M30816">
    <property type="protein sequence ID" value="AAA36330.1"/>
    <property type="status" value="JOINED"/>
    <property type="molecule type" value="Genomic_DNA"/>
</dbReference>
<dbReference type="EMBL" id="M31625">
    <property type="protein sequence ID" value="AAA36330.1"/>
    <property type="status" value="JOINED"/>
    <property type="molecule type" value="Genomic_DNA"/>
</dbReference>
<dbReference type="EMBL" id="X14768">
    <property type="protein sequence ID" value="CAA32876.1"/>
    <property type="molecule type" value="mRNA"/>
</dbReference>
<dbReference type="EMBL" id="M37719">
    <property type="protein sequence ID" value="AAA18102.1"/>
    <property type="molecule type" value="Genomic_DNA"/>
</dbReference>
<dbReference type="EMBL" id="S71513">
    <property type="protein sequence ID" value="AAB20651.1"/>
    <property type="molecule type" value="mRNA"/>
</dbReference>
<dbReference type="EMBL" id="S69738">
    <property type="protein sequence ID" value="AAB29926.1"/>
    <property type="molecule type" value="mRNA"/>
</dbReference>
<dbReference type="EMBL" id="Y18933">
    <property type="protein sequence ID" value="CAC14049.1"/>
    <property type="molecule type" value="Genomic_DNA"/>
</dbReference>
<dbReference type="EMBL" id="A17786">
    <property type="protein sequence ID" value="CAA01352.1"/>
    <property type="molecule type" value="mRNA"/>
</dbReference>
<dbReference type="EMBL" id="BT007329">
    <property type="protein sequence ID" value="AAP35993.1"/>
    <property type="molecule type" value="mRNA"/>
</dbReference>
<dbReference type="EMBL" id="AF519531">
    <property type="protein sequence ID" value="AAM54046.1"/>
    <property type="molecule type" value="Genomic_DNA"/>
</dbReference>
<dbReference type="EMBL" id="AK311960">
    <property type="protein sequence ID" value="BAG34900.1"/>
    <property type="molecule type" value="mRNA"/>
</dbReference>
<dbReference type="EMBL" id="CH471147">
    <property type="protein sequence ID" value="EAW80212.1"/>
    <property type="molecule type" value="Genomic_DNA"/>
</dbReference>
<dbReference type="EMBL" id="BC009716">
    <property type="protein sequence ID" value="AAH09716.1"/>
    <property type="molecule type" value="mRNA"/>
</dbReference>
<dbReference type="CCDS" id="CCDS11277.1"/>
<dbReference type="PIR" id="A35474">
    <property type="entry name" value="A60299"/>
</dbReference>
<dbReference type="RefSeq" id="NP_002973.1">
    <property type="nucleotide sequence ID" value="NM_002982.4"/>
</dbReference>
<dbReference type="PDB" id="1DOK">
    <property type="method" value="X-ray"/>
    <property type="resolution" value="1.85 A"/>
    <property type="chains" value="A/B=24-99"/>
</dbReference>
<dbReference type="PDB" id="1DOL">
    <property type="method" value="X-ray"/>
    <property type="resolution" value="2.40 A"/>
    <property type="chains" value="A=24-99"/>
</dbReference>
<dbReference type="PDB" id="1DOM">
    <property type="method" value="NMR"/>
    <property type="chains" value="A/B=24-99"/>
</dbReference>
<dbReference type="PDB" id="1DON">
    <property type="method" value="NMR"/>
    <property type="chains" value="A/B=24-99"/>
</dbReference>
<dbReference type="PDB" id="1ML0">
    <property type="method" value="X-ray"/>
    <property type="resolution" value="2.80 A"/>
    <property type="chains" value="D=24-99"/>
</dbReference>
<dbReference type="PDB" id="2BDN">
    <property type="method" value="X-ray"/>
    <property type="resolution" value="2.53 A"/>
    <property type="chains" value="A=24-99"/>
</dbReference>
<dbReference type="PDB" id="2NZ1">
    <property type="method" value="X-ray"/>
    <property type="resolution" value="2.50 A"/>
    <property type="chains" value="D/E/Y=24-99"/>
</dbReference>
<dbReference type="PDB" id="3IFD">
    <property type="method" value="X-ray"/>
    <property type="resolution" value="1.90 A"/>
    <property type="chains" value="A=24-99"/>
</dbReference>
<dbReference type="PDB" id="4DN4">
    <property type="method" value="X-ray"/>
    <property type="resolution" value="2.80 A"/>
    <property type="chains" value="M=24-99"/>
</dbReference>
<dbReference type="PDB" id="4R8I">
    <property type="method" value="X-ray"/>
    <property type="resolution" value="2.05 A"/>
    <property type="chains" value="A=24-99"/>
</dbReference>
<dbReference type="PDB" id="4ZK9">
    <property type="method" value="X-ray"/>
    <property type="resolution" value="2.60 A"/>
    <property type="chains" value="B=24-99"/>
</dbReference>
<dbReference type="PDB" id="7SO0">
    <property type="method" value="X-ray"/>
    <property type="resolution" value="1.74 A"/>
    <property type="chains" value="B=24-99"/>
</dbReference>
<dbReference type="PDB" id="7XA3">
    <property type="method" value="EM"/>
    <property type="resolution" value="2.90 A"/>
    <property type="chains" value="L=24-92"/>
</dbReference>
<dbReference type="PDB" id="8FJ0">
    <property type="method" value="X-ray"/>
    <property type="resolution" value="2.91 A"/>
    <property type="chains" value="D/E/F=24-99"/>
</dbReference>
<dbReference type="PDBsum" id="1DOK"/>
<dbReference type="PDBsum" id="1DOL"/>
<dbReference type="PDBsum" id="1DOM"/>
<dbReference type="PDBsum" id="1DON"/>
<dbReference type="PDBsum" id="1ML0"/>
<dbReference type="PDBsum" id="2BDN"/>
<dbReference type="PDBsum" id="2NZ1"/>
<dbReference type="PDBsum" id="3IFD"/>
<dbReference type="PDBsum" id="4DN4"/>
<dbReference type="PDBsum" id="4R8I"/>
<dbReference type="PDBsum" id="4ZK9"/>
<dbReference type="PDBsum" id="7SO0"/>
<dbReference type="PDBsum" id="7XA3"/>
<dbReference type="PDBsum" id="8FJ0"/>
<dbReference type="EMDB" id="EMD-33086"/>
<dbReference type="SMR" id="P13500"/>
<dbReference type="BioGRID" id="112251">
    <property type="interactions" value="31"/>
</dbReference>
<dbReference type="DIP" id="DIP-5838N"/>
<dbReference type="FunCoup" id="P13500">
    <property type="interactions" value="1005"/>
</dbReference>
<dbReference type="IntAct" id="P13500">
    <property type="interactions" value="20"/>
</dbReference>
<dbReference type="MINT" id="P13500"/>
<dbReference type="STRING" id="9606.ENSP00000225831"/>
<dbReference type="BindingDB" id="P13500"/>
<dbReference type="ChEMBL" id="CHEMBL1649052"/>
<dbReference type="DrugBank" id="DB12739">
    <property type="generic name" value="Bindarit"/>
</dbReference>
<dbReference type="DrugBank" id="DB09301">
    <property type="generic name" value="Chondroitin sulfate"/>
</dbReference>
<dbReference type="DrugBank" id="DB01406">
    <property type="generic name" value="Danazol"/>
</dbReference>
<dbReference type="DrugBank" id="DB01055">
    <property type="generic name" value="Mimosine"/>
</dbReference>
<dbReference type="DrugCentral" id="P13500"/>
<dbReference type="GlyCosmos" id="P13500">
    <property type="glycosylation" value="1 site, No reported glycans"/>
</dbReference>
<dbReference type="GlyGen" id="P13500">
    <property type="glycosylation" value="1 site"/>
</dbReference>
<dbReference type="PhosphoSitePlus" id="P13500"/>
<dbReference type="BioMuta" id="CCL2"/>
<dbReference type="DMDM" id="126842"/>
<dbReference type="MassIVE" id="P13500"/>
<dbReference type="PaxDb" id="9606-ENSP00000225831"/>
<dbReference type="PeptideAtlas" id="P13500"/>
<dbReference type="ProteomicsDB" id="52921"/>
<dbReference type="ABCD" id="P13500">
    <property type="antibodies" value="30 sequenced antibodies"/>
</dbReference>
<dbReference type="Antibodypedia" id="4427">
    <property type="antibodies" value="1786 antibodies from 47 providers"/>
</dbReference>
<dbReference type="DNASU" id="6347"/>
<dbReference type="Ensembl" id="ENST00000225831.4">
    <property type="protein sequence ID" value="ENSP00000225831.4"/>
    <property type="gene ID" value="ENSG00000108691.10"/>
</dbReference>
<dbReference type="GeneID" id="6347"/>
<dbReference type="KEGG" id="hsa:6347"/>
<dbReference type="MANE-Select" id="ENST00000225831.4">
    <property type="protein sequence ID" value="ENSP00000225831.4"/>
    <property type="RefSeq nucleotide sequence ID" value="NM_002982.4"/>
    <property type="RefSeq protein sequence ID" value="NP_002973.1"/>
</dbReference>
<dbReference type="UCSC" id="uc002hhy.4">
    <property type="organism name" value="human"/>
</dbReference>
<dbReference type="AGR" id="HGNC:10618"/>
<dbReference type="CTD" id="6347"/>
<dbReference type="DisGeNET" id="6347"/>
<dbReference type="GeneCards" id="CCL2"/>
<dbReference type="HGNC" id="HGNC:10618">
    <property type="gene designation" value="CCL2"/>
</dbReference>
<dbReference type="HPA" id="ENSG00000108691">
    <property type="expression patterns" value="Tissue enhanced (urinary)"/>
</dbReference>
<dbReference type="MalaCards" id="CCL2"/>
<dbReference type="MIM" id="158105">
    <property type="type" value="gene"/>
</dbReference>
<dbReference type="MIM" id="607948">
    <property type="type" value="phenotype"/>
</dbReference>
<dbReference type="neXtProt" id="NX_P13500"/>
<dbReference type="OpenTargets" id="ENSG00000108691"/>
<dbReference type="PharmGKB" id="PA130413151"/>
<dbReference type="VEuPathDB" id="HostDB:ENSG00000108691"/>
<dbReference type="eggNOG" id="ENOG502S6ZP">
    <property type="taxonomic scope" value="Eukaryota"/>
</dbReference>
<dbReference type="GeneTree" id="ENSGT01130000278316"/>
<dbReference type="HOGENOM" id="CLU_141716_1_0_1"/>
<dbReference type="InParanoid" id="P13500"/>
<dbReference type="OMA" id="PNQKWVK"/>
<dbReference type="OrthoDB" id="8934837at2759"/>
<dbReference type="PAN-GO" id="P13500">
    <property type="GO annotations" value="15 GO annotations based on evolutionary models"/>
</dbReference>
<dbReference type="PhylomeDB" id="P13500"/>
<dbReference type="TreeFam" id="TF334888"/>
<dbReference type="PathwayCommons" id="P13500"/>
<dbReference type="Reactome" id="R-HSA-380108">
    <property type="pathway name" value="Chemokine receptors bind chemokines"/>
</dbReference>
<dbReference type="Reactome" id="R-HSA-380994">
    <property type="pathway name" value="ATF4 activates genes in response to endoplasmic reticulum stress"/>
</dbReference>
<dbReference type="Reactome" id="R-HSA-6783783">
    <property type="pathway name" value="Interleukin-10 signaling"/>
</dbReference>
<dbReference type="Reactome" id="R-HSA-6785807">
    <property type="pathway name" value="Interleukin-4 and Interleukin-13 signaling"/>
</dbReference>
<dbReference type="Reactome" id="R-HSA-9818026">
    <property type="pathway name" value="NFE2L2 regulating inflammation associated genes"/>
</dbReference>
<dbReference type="SignaLink" id="P13500"/>
<dbReference type="SIGNOR" id="P13500"/>
<dbReference type="BioGRID-ORCS" id="6347">
    <property type="hits" value="13 hits in 1162 CRISPR screens"/>
</dbReference>
<dbReference type="ChiTaRS" id="CCL2">
    <property type="organism name" value="human"/>
</dbReference>
<dbReference type="EvolutionaryTrace" id="P13500"/>
<dbReference type="GeneWiki" id="CCL2"/>
<dbReference type="GenomeRNAi" id="6347"/>
<dbReference type="Pharos" id="P13500">
    <property type="development level" value="Tchem"/>
</dbReference>
<dbReference type="PRO" id="PR:P13500"/>
<dbReference type="Proteomes" id="UP000005640">
    <property type="component" value="Chromosome 17"/>
</dbReference>
<dbReference type="RNAct" id="P13500">
    <property type="molecule type" value="protein"/>
</dbReference>
<dbReference type="Bgee" id="ENSG00000108691">
    <property type="expression patterns" value="Expressed in vena cava and 175 other cell types or tissues"/>
</dbReference>
<dbReference type="ExpressionAtlas" id="P13500">
    <property type="expression patterns" value="baseline and differential"/>
</dbReference>
<dbReference type="GO" id="GO:0005576">
    <property type="term" value="C:extracellular region"/>
    <property type="evidence" value="ECO:0000314"/>
    <property type="project" value="BHF-UCL"/>
</dbReference>
<dbReference type="GO" id="GO:0005615">
    <property type="term" value="C:extracellular space"/>
    <property type="evidence" value="ECO:0000318"/>
    <property type="project" value="GO_Central"/>
</dbReference>
<dbReference type="GO" id="GO:0048020">
    <property type="term" value="F:CCR chemokine receptor binding"/>
    <property type="evidence" value="ECO:0000318"/>
    <property type="project" value="GO_Central"/>
</dbReference>
<dbReference type="GO" id="GO:0031727">
    <property type="term" value="F:CCR2 chemokine receptor binding"/>
    <property type="evidence" value="ECO:0000250"/>
    <property type="project" value="BHF-UCL"/>
</dbReference>
<dbReference type="GO" id="GO:0042056">
    <property type="term" value="F:chemoattractant activity"/>
    <property type="evidence" value="ECO:0000250"/>
    <property type="project" value="BHF-UCL"/>
</dbReference>
<dbReference type="GO" id="GO:0008009">
    <property type="term" value="F:chemokine activity"/>
    <property type="evidence" value="ECO:0000318"/>
    <property type="project" value="GO_Central"/>
</dbReference>
<dbReference type="GO" id="GO:0004672">
    <property type="term" value="F:protein kinase activity"/>
    <property type="evidence" value="ECO:0000304"/>
    <property type="project" value="ProtInc"/>
</dbReference>
<dbReference type="GO" id="GO:0005102">
    <property type="term" value="F:signaling receptor binding"/>
    <property type="evidence" value="ECO:0000304"/>
    <property type="project" value="ProtInc"/>
</dbReference>
<dbReference type="GO" id="GO:0001525">
    <property type="term" value="P:angiogenesis"/>
    <property type="evidence" value="ECO:0000304"/>
    <property type="project" value="BHF-UCL"/>
</dbReference>
<dbReference type="GO" id="GO:0009887">
    <property type="term" value="P:animal organ morphogenesis"/>
    <property type="evidence" value="ECO:0000304"/>
    <property type="project" value="ProtInc"/>
</dbReference>
<dbReference type="GO" id="GO:0061844">
    <property type="term" value="P:antimicrobial humoral immune response mediated by antimicrobial peptide"/>
    <property type="evidence" value="ECO:0000318"/>
    <property type="project" value="GO_Central"/>
</dbReference>
<dbReference type="GO" id="GO:0043615">
    <property type="term" value="P:astrocyte cell migration"/>
    <property type="evidence" value="ECO:0000314"/>
    <property type="project" value="BHF-UCL"/>
</dbReference>
<dbReference type="GO" id="GO:0007155">
    <property type="term" value="P:cell adhesion"/>
    <property type="evidence" value="ECO:0000304"/>
    <property type="project" value="ProtInc"/>
</dbReference>
<dbReference type="GO" id="GO:0007166">
    <property type="term" value="P:cell surface receptor signaling pathway"/>
    <property type="evidence" value="ECO:0000304"/>
    <property type="project" value="ProtInc"/>
</dbReference>
<dbReference type="GO" id="GO:0007259">
    <property type="term" value="P:cell surface receptor signaling pathway via JAK-STAT"/>
    <property type="evidence" value="ECO:0000304"/>
    <property type="project" value="ProtInc"/>
</dbReference>
<dbReference type="GO" id="GO:0019725">
    <property type="term" value="P:cellular homeostasis"/>
    <property type="evidence" value="ECO:0000304"/>
    <property type="project" value="BHF-UCL"/>
</dbReference>
<dbReference type="GO" id="GO:0044344">
    <property type="term" value="P:cellular response to fibroblast growth factor stimulus"/>
    <property type="evidence" value="ECO:0000270"/>
    <property type="project" value="UniProtKB"/>
</dbReference>
<dbReference type="GO" id="GO:0071347">
    <property type="term" value="P:cellular response to interleukin-1"/>
    <property type="evidence" value="ECO:0000270"/>
    <property type="project" value="UniProtKB"/>
</dbReference>
<dbReference type="GO" id="GO:0071222">
    <property type="term" value="P:cellular response to lipopolysaccharide"/>
    <property type="evidence" value="ECO:0000250"/>
    <property type="project" value="BHF-UCL"/>
</dbReference>
<dbReference type="GO" id="GO:0071356">
    <property type="term" value="P:cellular response to tumor necrosis factor"/>
    <property type="evidence" value="ECO:0000270"/>
    <property type="project" value="UniProtKB"/>
</dbReference>
<dbReference type="GO" id="GO:0071346">
    <property type="term" value="P:cellular response to type II interferon"/>
    <property type="evidence" value="ECO:0000270"/>
    <property type="project" value="UniProtKB"/>
</dbReference>
<dbReference type="GO" id="GO:0038148">
    <property type="term" value="P:chemokine (C-C motif) ligand 2 signaling pathway"/>
    <property type="evidence" value="ECO:0000250"/>
    <property type="project" value="BHF-UCL"/>
</dbReference>
<dbReference type="GO" id="GO:0070098">
    <property type="term" value="P:chemokine-mediated signaling pathway"/>
    <property type="evidence" value="ECO:0000318"/>
    <property type="project" value="GO_Central"/>
</dbReference>
<dbReference type="GO" id="GO:0006935">
    <property type="term" value="P:chemotaxis"/>
    <property type="evidence" value="ECO:0000304"/>
    <property type="project" value="ProtInc"/>
</dbReference>
<dbReference type="GO" id="GO:0019221">
    <property type="term" value="P:cytokine-mediated signaling pathway"/>
    <property type="evidence" value="ECO:0000314"/>
    <property type="project" value="BHF-UCL"/>
</dbReference>
<dbReference type="GO" id="GO:0007010">
    <property type="term" value="P:cytoskeleton organization"/>
    <property type="evidence" value="ECO:0000314"/>
    <property type="project" value="UniProtKB"/>
</dbReference>
<dbReference type="GO" id="GO:0048245">
    <property type="term" value="P:eosinophil chemotaxis"/>
    <property type="evidence" value="ECO:0000318"/>
    <property type="project" value="GO_Central"/>
</dbReference>
<dbReference type="GO" id="GO:0007186">
    <property type="term" value="P:G protein-coupled receptor signaling pathway"/>
    <property type="evidence" value="ECO:0000304"/>
    <property type="project" value="ProtInc"/>
</dbReference>
<dbReference type="GO" id="GO:0007187">
    <property type="term" value="P:G protein-coupled receptor signaling pathway, coupled to cyclic nucleotide second messenger"/>
    <property type="evidence" value="ECO:0000304"/>
    <property type="project" value="ProtInc"/>
</dbReference>
<dbReference type="GO" id="GO:0035684">
    <property type="term" value="P:helper T cell extravasation"/>
    <property type="evidence" value="ECO:0000250"/>
    <property type="project" value="BHF-UCL"/>
</dbReference>
<dbReference type="GO" id="GO:0006959">
    <property type="term" value="P:humoral immune response"/>
    <property type="evidence" value="ECO:0000304"/>
    <property type="project" value="ProtInc"/>
</dbReference>
<dbReference type="GO" id="GO:0006954">
    <property type="term" value="P:inflammatory response"/>
    <property type="evidence" value="ECO:0000318"/>
    <property type="project" value="GO_Central"/>
</dbReference>
<dbReference type="GO" id="GO:0048246">
    <property type="term" value="P:macrophage chemotaxis"/>
    <property type="evidence" value="ECO:0000314"/>
    <property type="project" value="BHF-UCL"/>
</dbReference>
<dbReference type="GO" id="GO:0002548">
    <property type="term" value="P:monocyte chemotaxis"/>
    <property type="evidence" value="ECO:0000314"/>
    <property type="project" value="BHF-UCL"/>
</dbReference>
<dbReference type="GO" id="GO:2000134">
    <property type="term" value="P:negative regulation of G1/S transition of mitotic cell cycle"/>
    <property type="evidence" value="ECO:0000315"/>
    <property type="project" value="BHF-UCL"/>
</dbReference>
<dbReference type="GO" id="GO:0034351">
    <property type="term" value="P:negative regulation of glial cell apoptotic process"/>
    <property type="evidence" value="ECO:0000314"/>
    <property type="project" value="UniProtKB"/>
</dbReference>
<dbReference type="GO" id="GO:2000502">
    <property type="term" value="P:negative regulation of natural killer cell chemotaxis"/>
    <property type="evidence" value="ECO:0000314"/>
    <property type="project" value="UniProtKB"/>
</dbReference>
<dbReference type="GO" id="GO:0043524">
    <property type="term" value="P:negative regulation of neuron apoptotic process"/>
    <property type="evidence" value="ECO:0000314"/>
    <property type="project" value="UniProtKB"/>
</dbReference>
<dbReference type="GO" id="GO:1905563">
    <property type="term" value="P:negative regulation of vascular endothelial cell proliferation"/>
    <property type="evidence" value="ECO:0000315"/>
    <property type="project" value="BHF-UCL"/>
</dbReference>
<dbReference type="GO" id="GO:2000427">
    <property type="term" value="P:positive regulation of apoptotic cell clearance"/>
    <property type="evidence" value="ECO:0000250"/>
    <property type="project" value="BHF-UCL"/>
</dbReference>
<dbReference type="GO" id="GO:0090280">
    <property type="term" value="P:positive regulation of calcium ion import"/>
    <property type="evidence" value="ECO:0000314"/>
    <property type="project" value="BHF-UCL"/>
</dbReference>
<dbReference type="GO" id="GO:0030335">
    <property type="term" value="P:positive regulation of cell migration"/>
    <property type="evidence" value="ECO:0000318"/>
    <property type="project" value="GO_Central"/>
</dbReference>
<dbReference type="GO" id="GO:2000353">
    <property type="term" value="P:positive regulation of endothelial cell apoptotic process"/>
    <property type="evidence" value="ECO:0000315"/>
    <property type="project" value="BHF-UCL"/>
</dbReference>
<dbReference type="GO" id="GO:0010628">
    <property type="term" value="P:positive regulation of gene expression"/>
    <property type="evidence" value="ECO:0000250"/>
    <property type="project" value="BHF-UCL"/>
</dbReference>
<dbReference type="GO" id="GO:1900451">
    <property type="term" value="P:positive regulation of glutamate receptor signaling pathway"/>
    <property type="evidence" value="ECO:0000250"/>
    <property type="project" value="ARUK-UCL"/>
</dbReference>
<dbReference type="GO" id="GO:0010759">
    <property type="term" value="P:positive regulation of macrophage chemotaxis"/>
    <property type="evidence" value="ECO:0000250"/>
    <property type="project" value="BHF-UCL"/>
</dbReference>
<dbReference type="GO" id="GO:0051968">
    <property type="term" value="P:positive regulation of synaptic transmission, glutamatergic"/>
    <property type="evidence" value="ECO:0000250"/>
    <property type="project" value="UniProtKB"/>
</dbReference>
<dbReference type="GO" id="GO:0050870">
    <property type="term" value="P:positive regulation of T cell activation"/>
    <property type="evidence" value="ECO:0000250"/>
    <property type="project" value="BHF-UCL"/>
</dbReference>
<dbReference type="GO" id="GO:0006468">
    <property type="term" value="P:protein phosphorylation"/>
    <property type="evidence" value="ECO:0000304"/>
    <property type="project" value="ProtInc"/>
</dbReference>
<dbReference type="GO" id="GO:0008360">
    <property type="term" value="P:regulation of cell shape"/>
    <property type="evidence" value="ECO:0000314"/>
    <property type="project" value="UniProtKB"/>
</dbReference>
<dbReference type="GO" id="GO:0009617">
    <property type="term" value="P:response to bacterium"/>
    <property type="evidence" value="ECO:0000303"/>
    <property type="project" value="BHF-UCL"/>
</dbReference>
<dbReference type="GO" id="GO:0019233">
    <property type="term" value="P:sensory perception of pain"/>
    <property type="evidence" value="ECO:0000250"/>
    <property type="project" value="UniProtKB"/>
</dbReference>
<dbReference type="GO" id="GO:0007165">
    <property type="term" value="P:signal transduction"/>
    <property type="evidence" value="ECO:0000303"/>
    <property type="project" value="ProtInc"/>
</dbReference>
<dbReference type="GO" id="GO:0019079">
    <property type="term" value="P:viral genome replication"/>
    <property type="evidence" value="ECO:0000304"/>
    <property type="project" value="ProtInc"/>
</dbReference>
<dbReference type="CDD" id="cd00272">
    <property type="entry name" value="Chemokine_CC"/>
    <property type="match status" value="1"/>
</dbReference>
<dbReference type="FunFam" id="2.40.50.40:FF:000002">
    <property type="entry name" value="C-C motif chemokine"/>
    <property type="match status" value="1"/>
</dbReference>
<dbReference type="Gene3D" id="2.40.50.40">
    <property type="match status" value="1"/>
</dbReference>
<dbReference type="InterPro" id="IPR039809">
    <property type="entry name" value="Chemokine_b/g/d"/>
</dbReference>
<dbReference type="InterPro" id="IPR000827">
    <property type="entry name" value="Chemokine_CC_CS"/>
</dbReference>
<dbReference type="InterPro" id="IPR001811">
    <property type="entry name" value="Chemokine_IL8-like_dom"/>
</dbReference>
<dbReference type="InterPro" id="IPR036048">
    <property type="entry name" value="Interleukin_8-like_sf"/>
</dbReference>
<dbReference type="PANTHER" id="PTHR12015:SF98">
    <property type="entry name" value="C-C MOTIF CHEMOKINE 2"/>
    <property type="match status" value="1"/>
</dbReference>
<dbReference type="PANTHER" id="PTHR12015">
    <property type="entry name" value="SMALL INDUCIBLE CYTOKINE A"/>
    <property type="match status" value="1"/>
</dbReference>
<dbReference type="Pfam" id="PF00048">
    <property type="entry name" value="IL8"/>
    <property type="match status" value="1"/>
</dbReference>
<dbReference type="SMART" id="SM00199">
    <property type="entry name" value="SCY"/>
    <property type="match status" value="1"/>
</dbReference>
<dbReference type="SUPFAM" id="SSF54117">
    <property type="entry name" value="Interleukin 8-like chemokines"/>
    <property type="match status" value="1"/>
</dbReference>
<dbReference type="PROSITE" id="PS00472">
    <property type="entry name" value="SMALL_CYTOKINES_CC"/>
    <property type="match status" value="1"/>
</dbReference>
<accession>P13500</accession>
<accession>B2R4V3</accession>
<accession>Q9UDF3</accession>
<evidence type="ECO:0000255" key="1"/>
<evidence type="ECO:0000269" key="2">
    <source>
    </source>
</evidence>
<evidence type="ECO:0000269" key="3">
    <source>
    </source>
</evidence>
<evidence type="ECO:0000269" key="4">
    <source>
    </source>
</evidence>
<evidence type="ECO:0000269" key="5">
    <source>
    </source>
</evidence>
<evidence type="ECO:0000269" key="6">
    <source>
    </source>
</evidence>
<evidence type="ECO:0000269" key="7">
    <source>
    </source>
</evidence>
<evidence type="ECO:0000269" key="8">
    <source>
    </source>
</evidence>
<evidence type="ECO:0000269" key="9">
    <source>
    </source>
</evidence>
<evidence type="ECO:0000269" key="10">
    <source>
    </source>
</evidence>
<evidence type="ECO:0000269" key="11">
    <source>
    </source>
</evidence>
<evidence type="ECO:0000269" key="12">
    <source>
    </source>
</evidence>
<evidence type="ECO:0000269" key="13">
    <source>
    </source>
</evidence>
<evidence type="ECO:0000269" key="14">
    <source>
    </source>
</evidence>
<evidence type="ECO:0000269" key="15">
    <source>
    </source>
</evidence>
<evidence type="ECO:0000269" key="16">
    <source>
    </source>
</evidence>
<evidence type="ECO:0000269" key="17">
    <source>
    </source>
</evidence>
<evidence type="ECO:0000269" key="18">
    <source>
    </source>
</evidence>
<evidence type="ECO:0000269" key="19">
    <source>
    </source>
</evidence>
<evidence type="ECO:0000269" key="20">
    <source>
    </source>
</evidence>
<evidence type="ECO:0000269" key="21">
    <source>
    </source>
</evidence>
<evidence type="ECO:0000305" key="22"/>
<evidence type="ECO:0007829" key="23">
    <source>
        <dbReference type="PDB" id="1DOK"/>
    </source>
</evidence>
<evidence type="ECO:0007829" key="24">
    <source>
        <dbReference type="PDB" id="4ZK9"/>
    </source>
</evidence>
<evidence type="ECO:0007829" key="25">
    <source>
        <dbReference type="PDB" id="7SO0"/>
    </source>
</evidence>
<reference key="1">
    <citation type="journal article" date="1989" name="Biochem. Biophys. Res. Commun.">
        <title>Cloning and sequencing of the cDNA for human monocyte chemotactic and activating factor (MCAF).</title>
        <authorList>
            <person name="Furutani Y."/>
            <person name="Nomura H."/>
            <person name="Notake M."/>
            <person name="Oyamada Y."/>
            <person name="Fukui T."/>
            <person name="Yamada M."/>
            <person name="Larsen C.G."/>
            <person name="Oppenheim J.J."/>
            <person name="Matsushima K."/>
        </authorList>
    </citation>
    <scope>NUCLEOTIDE SEQUENCE [MRNA]</scope>
</reference>
<reference key="2">
    <citation type="journal article" date="1989" name="Mol. Cell. Biol.">
        <title>The human homolog of the JE gene encodes a monocyte secretory protein.</title>
        <authorList>
            <person name="Rollins B.J."/>
            <person name="Stier P."/>
            <person name="Ernst T."/>
            <person name="Wong G.G."/>
        </authorList>
    </citation>
    <scope>NUCLEOTIDE SEQUENCE [GENOMIC DNA / MRNA]</scope>
    <scope>SUBCELLULAR LOCATION</scope>
    <scope>GLYCOSYLATION</scope>
    <scope>TISSUE SPECIFICITY</scope>
</reference>
<reference key="3">
    <citation type="journal article" date="1989" name="FEBS Lett.">
        <title>Human monocyte chemoattractant protein-1 (MCP-1). Full-length cDNA cloning, expression in mitogen-stimulated blood mononuclear leukocytes, and sequence similarity to mouse competence gene JE.</title>
        <authorList>
            <person name="Yoshimura T."/>
            <person name="Yuhki N."/>
            <person name="Moore S.K."/>
            <person name="Appella E."/>
            <person name="Lerman M.I."/>
            <person name="Leonard E.J."/>
        </authorList>
    </citation>
    <scope>NUCLEOTIDE SEQUENCE [MRNA]</scope>
    <source>
        <tissue>Glial tumor</tissue>
    </source>
</reference>
<reference key="4">
    <citation type="journal article" date="1989" name="Int. Immunol.">
        <title>Cloning and expression of a gamma-interferon-inducible gene in monocytes: a new member of a cytokine gene family.</title>
        <authorList>
            <person name="Chang H.C."/>
            <person name="Hsu F."/>
            <person name="Freeman G.J."/>
            <person name="Griffin J.D."/>
            <person name="Reinherz E.L."/>
        </authorList>
    </citation>
    <scope>NUCLEOTIDE SEQUENCE [MRNA]</scope>
</reference>
<reference key="5">
    <citation type="journal article" date="1990" name="Biochem. Biophys. Res. Commun.">
        <title>Structure of human monocyte chemotactic protein gene and its regulation by TPA.</title>
        <authorList>
            <person name="Shyy Y.J."/>
            <person name="Li Y.S."/>
            <person name="Kolattukudy P.E."/>
        </authorList>
    </citation>
    <scope>NUCLEOTIDE SEQUENCE [GENOMIC DNA]</scope>
</reference>
<reference key="6">
    <citation type="journal article" date="1991" name="Adv. Exp. Med. Biol.">
        <title>Human monocyte chemoattractant protein-1 (MCP-1).</title>
        <authorList>
            <person name="Yoshimura T."/>
            <person name="Leonard E.J."/>
        </authorList>
    </citation>
    <scope>NUCLEOTIDE SEQUENCE [MRNA]</scope>
</reference>
<reference key="7">
    <citation type="journal article" date="1993" name="Mol. Cell. Biochem.">
        <title>The expression of monocyte chemotactic protein (MCP-1) in human vascular endothelium in vitro and in vivo.</title>
        <authorList>
            <person name="Li Y.S."/>
            <person name="Shyy Y.J."/>
            <person name="Wright J.G."/>
            <person name="Valente A.J."/>
            <person name="Cornhill J.F."/>
            <person name="Kolattukudy P.E."/>
        </authorList>
    </citation>
    <scope>NUCLEOTIDE SEQUENCE [MRNA]</scope>
    <scope>FUNCTION</scope>
</reference>
<reference key="8">
    <citation type="journal article" date="2000" name="Oncogene">
        <title>Differential transcriptional regulation of the monocyte-chemoattractant protein-1 (MCP-1) gene in tumorigenic and non-tumorigenic HPV 18 positive cells: the role of the chromatin structure and AP-1 composition.</title>
        <authorList>
            <person name="Finzer P."/>
            <person name="Soto U."/>
            <person name="Delius H."/>
            <person name="Patzelt A."/>
            <person name="Poustka A."/>
            <person name="Coy J.F."/>
            <person name="zur Hausen H."/>
            <person name="Roesl F."/>
        </authorList>
    </citation>
    <scope>NUCLEOTIDE SEQUENCE [GENOMIC DNA]</scope>
</reference>
<reference key="9">
    <citation type="patent" date="1992-06-03" number="EP0488900">
        <title>Protein with cytokine activity, recombinant DNA, expression vector and hosts for obtaining it.</title>
        <authorList>
            <person name="Caput D."/>
            <person name="Ferrara P."/>
            <person name="Miloux B."/>
            <person name="Minty A."/>
            <person name="Vita N."/>
        </authorList>
    </citation>
    <scope>NUCLEOTIDE SEQUENCE [MRNA]</scope>
</reference>
<reference key="10">
    <citation type="submission" date="2003-05" db="EMBL/GenBank/DDBJ databases">
        <title>Cloning of human full-length CDSs in BD Creator(TM) system donor vector.</title>
        <authorList>
            <person name="Kalnine N."/>
            <person name="Chen X."/>
            <person name="Rolfs A."/>
            <person name="Halleck A."/>
            <person name="Hines L."/>
            <person name="Eisenstein S."/>
            <person name="Koundinya M."/>
            <person name="Raphael J."/>
            <person name="Moreira D."/>
            <person name="Kelley T."/>
            <person name="LaBaer J."/>
            <person name="Lin Y."/>
            <person name="Phelan M."/>
            <person name="Farmer A."/>
        </authorList>
    </citation>
    <scope>NUCLEOTIDE SEQUENCE [LARGE SCALE MRNA]</scope>
</reference>
<reference key="11">
    <citation type="submission" date="2002-06" db="EMBL/GenBank/DDBJ databases">
        <authorList>
            <consortium name="SeattleSNPs variation discovery resource"/>
        </authorList>
    </citation>
    <scope>NUCLEOTIDE SEQUENCE [GENOMIC DNA]</scope>
</reference>
<reference key="12">
    <citation type="journal article" date="2004" name="Nat. Genet.">
        <title>Complete sequencing and characterization of 21,243 full-length human cDNAs.</title>
        <authorList>
            <person name="Ota T."/>
            <person name="Suzuki Y."/>
            <person name="Nishikawa T."/>
            <person name="Otsuki T."/>
            <person name="Sugiyama T."/>
            <person name="Irie R."/>
            <person name="Wakamatsu A."/>
            <person name="Hayashi K."/>
            <person name="Sato H."/>
            <person name="Nagai K."/>
            <person name="Kimura K."/>
            <person name="Makita H."/>
            <person name="Sekine M."/>
            <person name="Obayashi M."/>
            <person name="Nishi T."/>
            <person name="Shibahara T."/>
            <person name="Tanaka T."/>
            <person name="Ishii S."/>
            <person name="Yamamoto J."/>
            <person name="Saito K."/>
            <person name="Kawai Y."/>
            <person name="Isono Y."/>
            <person name="Nakamura Y."/>
            <person name="Nagahari K."/>
            <person name="Murakami K."/>
            <person name="Yasuda T."/>
            <person name="Iwayanagi T."/>
            <person name="Wagatsuma M."/>
            <person name="Shiratori A."/>
            <person name="Sudo H."/>
            <person name="Hosoiri T."/>
            <person name="Kaku Y."/>
            <person name="Kodaira H."/>
            <person name="Kondo H."/>
            <person name="Sugawara M."/>
            <person name="Takahashi M."/>
            <person name="Kanda K."/>
            <person name="Yokoi T."/>
            <person name="Furuya T."/>
            <person name="Kikkawa E."/>
            <person name="Omura Y."/>
            <person name="Abe K."/>
            <person name="Kamihara K."/>
            <person name="Katsuta N."/>
            <person name="Sato K."/>
            <person name="Tanikawa M."/>
            <person name="Yamazaki M."/>
            <person name="Ninomiya K."/>
            <person name="Ishibashi T."/>
            <person name="Yamashita H."/>
            <person name="Murakawa K."/>
            <person name="Fujimori K."/>
            <person name="Tanai H."/>
            <person name="Kimata M."/>
            <person name="Watanabe M."/>
            <person name="Hiraoka S."/>
            <person name="Chiba Y."/>
            <person name="Ishida S."/>
            <person name="Ono Y."/>
            <person name="Takiguchi S."/>
            <person name="Watanabe S."/>
            <person name="Yosida M."/>
            <person name="Hotuta T."/>
            <person name="Kusano J."/>
            <person name="Kanehori K."/>
            <person name="Takahashi-Fujii A."/>
            <person name="Hara H."/>
            <person name="Tanase T.-O."/>
            <person name="Nomura Y."/>
            <person name="Togiya S."/>
            <person name="Komai F."/>
            <person name="Hara R."/>
            <person name="Takeuchi K."/>
            <person name="Arita M."/>
            <person name="Imose N."/>
            <person name="Musashino K."/>
            <person name="Yuuki H."/>
            <person name="Oshima A."/>
            <person name="Sasaki N."/>
            <person name="Aotsuka S."/>
            <person name="Yoshikawa Y."/>
            <person name="Matsunawa H."/>
            <person name="Ichihara T."/>
            <person name="Shiohata N."/>
            <person name="Sano S."/>
            <person name="Moriya S."/>
            <person name="Momiyama H."/>
            <person name="Satoh N."/>
            <person name="Takami S."/>
            <person name="Terashima Y."/>
            <person name="Suzuki O."/>
            <person name="Nakagawa S."/>
            <person name="Senoh A."/>
            <person name="Mizoguchi H."/>
            <person name="Goto Y."/>
            <person name="Shimizu F."/>
            <person name="Wakebe H."/>
            <person name="Hishigaki H."/>
            <person name="Watanabe T."/>
            <person name="Sugiyama A."/>
            <person name="Takemoto M."/>
            <person name="Kawakami B."/>
            <person name="Yamazaki M."/>
            <person name="Watanabe K."/>
            <person name="Kumagai A."/>
            <person name="Itakura S."/>
            <person name="Fukuzumi Y."/>
            <person name="Fujimori Y."/>
            <person name="Komiyama M."/>
            <person name="Tashiro H."/>
            <person name="Tanigami A."/>
            <person name="Fujiwara T."/>
            <person name="Ono T."/>
            <person name="Yamada K."/>
            <person name="Fujii Y."/>
            <person name="Ozaki K."/>
            <person name="Hirao M."/>
            <person name="Ohmori Y."/>
            <person name="Kawabata A."/>
            <person name="Hikiji T."/>
            <person name="Kobatake N."/>
            <person name="Inagaki H."/>
            <person name="Ikema Y."/>
            <person name="Okamoto S."/>
            <person name="Okitani R."/>
            <person name="Kawakami T."/>
            <person name="Noguchi S."/>
            <person name="Itoh T."/>
            <person name="Shigeta K."/>
            <person name="Senba T."/>
            <person name="Matsumura K."/>
            <person name="Nakajima Y."/>
            <person name="Mizuno T."/>
            <person name="Morinaga M."/>
            <person name="Sasaki M."/>
            <person name="Togashi T."/>
            <person name="Oyama M."/>
            <person name="Hata H."/>
            <person name="Watanabe M."/>
            <person name="Komatsu T."/>
            <person name="Mizushima-Sugano J."/>
            <person name="Satoh T."/>
            <person name="Shirai Y."/>
            <person name="Takahashi Y."/>
            <person name="Nakagawa K."/>
            <person name="Okumura K."/>
            <person name="Nagase T."/>
            <person name="Nomura N."/>
            <person name="Kikuchi H."/>
            <person name="Masuho Y."/>
            <person name="Yamashita R."/>
            <person name="Nakai K."/>
            <person name="Yada T."/>
            <person name="Nakamura Y."/>
            <person name="Ohara O."/>
            <person name="Isogai T."/>
            <person name="Sugano S."/>
        </authorList>
    </citation>
    <scope>NUCLEOTIDE SEQUENCE [LARGE SCALE MRNA]</scope>
    <source>
        <tissue>Urinary bladder</tissue>
    </source>
</reference>
<reference key="13">
    <citation type="submission" date="2005-09" db="EMBL/GenBank/DDBJ databases">
        <authorList>
            <person name="Mural R.J."/>
            <person name="Istrail S."/>
            <person name="Sutton G.G."/>
            <person name="Florea L."/>
            <person name="Halpern A.L."/>
            <person name="Mobarry C.M."/>
            <person name="Lippert R."/>
            <person name="Walenz B."/>
            <person name="Shatkay H."/>
            <person name="Dew I."/>
            <person name="Miller J.R."/>
            <person name="Flanigan M.J."/>
            <person name="Edwards N.J."/>
            <person name="Bolanos R."/>
            <person name="Fasulo D."/>
            <person name="Halldorsson B.V."/>
            <person name="Hannenhalli S."/>
            <person name="Turner R."/>
            <person name="Yooseph S."/>
            <person name="Lu F."/>
            <person name="Nusskern D.R."/>
            <person name="Shue B.C."/>
            <person name="Zheng X.H."/>
            <person name="Zhong F."/>
            <person name="Delcher A.L."/>
            <person name="Huson D.H."/>
            <person name="Kravitz S.A."/>
            <person name="Mouchard L."/>
            <person name="Reinert K."/>
            <person name="Remington K.A."/>
            <person name="Clark A.G."/>
            <person name="Waterman M.S."/>
            <person name="Eichler E.E."/>
            <person name="Adams M.D."/>
            <person name="Hunkapiller M.W."/>
            <person name="Myers E.W."/>
            <person name="Venter J.C."/>
        </authorList>
    </citation>
    <scope>NUCLEOTIDE SEQUENCE [LARGE SCALE GENOMIC DNA]</scope>
</reference>
<reference key="14">
    <citation type="journal article" date="2004" name="Genome Res.">
        <title>The status, quality, and expansion of the NIH full-length cDNA project: the Mammalian Gene Collection (MGC).</title>
        <authorList>
            <consortium name="The MGC Project Team"/>
        </authorList>
    </citation>
    <scope>NUCLEOTIDE SEQUENCE [LARGE SCALE MRNA]</scope>
    <source>
        <tissue>Pancreas</tissue>
    </source>
</reference>
<reference key="15">
    <citation type="journal article" date="1989" name="Proc. Natl. Acad. Sci. U.S.A.">
        <title>Complete amino acid sequence of a human monocyte chemoattractant, a putative mediator of cellular immune reactions.</title>
        <authorList>
            <person name="Robinson E.A."/>
            <person name="Yoshimura T."/>
            <person name="Leonard E.J."/>
            <person name="Tanaka S."/>
            <person name="Griffin P.R."/>
            <person name="Shabanowitz J."/>
            <person name="Hunt D.F."/>
            <person name="Appella E."/>
        </authorList>
    </citation>
    <scope>PROTEIN SEQUENCE OF 24-99</scope>
    <scope>PYROGLUTAMATE FORMATION AT GLN-24</scope>
</reference>
<reference key="16">
    <citation type="journal article" date="1990" name="Biochem. Biophys. Res. Commun.">
        <title>Identification of the monocyte chemotactic protein from human osteosarcoma cells and monocytes: detection of a novel N-terminally processed form.</title>
        <authorList>
            <person name="Decock B."/>
            <person name="Conings R."/>
            <person name="Lenaerts J.-P."/>
            <person name="Biliau A."/>
            <person name="van Damme J."/>
        </authorList>
    </citation>
    <scope>PROTEIN SEQUENCE OF 29-53 AND 82-92</scope>
</reference>
<reference key="17">
    <citation type="journal article" date="1991" name="Genomics">
        <title>Assignment of the human small inducible cytokine A2 gene, SCYA2 (encoding JE or MCP-1), to 17q11.2-12: evolutionary relatedness of cytokines clustered at the same locus.</title>
        <authorList>
            <person name="Rollins B.J."/>
            <person name="Morton C.C."/>
            <person name="Ledbetter D.H."/>
            <person name="Eddy R.L. Jr."/>
            <person name="Shows T.B."/>
        </authorList>
    </citation>
    <scope>GENE STRUCTURE</scope>
</reference>
<reference key="18">
    <citation type="journal article" date="1994" name="J. Biol. Chem.">
        <title>Structure/activity analysis of human monocyte chemoattractant protein-1 (MCP-1) by mutagenesis. Identification of a mutated protein that inhibits MCP-1-mediated monocyte chemotaxis.</title>
        <authorList>
            <person name="Zhang Y.J."/>
            <person name="Rutledge B.J."/>
            <person name="Rollins B.J."/>
        </authorList>
    </citation>
    <scope>FUNCTION</scope>
    <scope>MUTAGENESIS</scope>
</reference>
<reference key="19">
    <citation type="journal article" date="1996" name="J. Exp. Med.">
        <title>Deletion of the NH2-terminal residue converts monocyte chemotactic protein 1 from an activator of basophil mediator release to an eosinophil chemoattractant.</title>
        <authorList>
            <person name="Weber M."/>
            <person name="Uguccioni M."/>
            <person name="Baggiolini M."/>
            <person name="Clark-Lewis I."/>
            <person name="Dahinden C.A."/>
        </authorList>
    </citation>
    <scope>FUNCTION</scope>
    <scope>EFFECT OF DELETION OF N-TERMINAL RESIDUES</scope>
</reference>
<reference key="20">
    <citation type="journal article" date="1996" name="FEBS Lett.">
        <title>Structural characterization of a monomeric chemokine: monocyte chemoattractant protein-3.</title>
        <authorList>
            <person name="Kim K.-S."/>
            <person name="Rajarathnam K."/>
            <person name="Clark-Lewis I."/>
            <person name="Sykes B.D."/>
        </authorList>
    </citation>
    <scope>SUBUNIT</scope>
</reference>
<reference key="21">
    <citation type="journal article" date="1998" name="J. Biol. Chem.">
        <title>Lysine 58 and histidine 66 at the C-terminal alpha-helix of monocyte chemoattractant protein-1 are essential for glycosaminoglycan binding.</title>
        <authorList>
            <person name="Chakravarty L."/>
            <person name="Rogers L."/>
            <person name="Quach T."/>
            <person name="Breckenridge S."/>
            <person name="Kolattukudy P.E."/>
        </authorList>
    </citation>
    <scope>FUNCTION</scope>
    <scope>GAG BINDING SITES LYS-81 AND HIS-89</scope>
    <scope>MUTAGENESIS OF LYS-81; HIS-89 AND 95-GLN--THR-99</scope>
</reference>
<reference key="22">
    <citation type="journal article" date="1998" name="J. Biol. Chem.">
        <title>Monomeric monocyte chemoattractant protein-1 (MCP-1) binds and activates the MCP-1 receptor CCR2B.</title>
        <authorList>
            <person name="Paavola C.D."/>
            <person name="Hemmerich S."/>
            <person name="Grunberger D."/>
            <person name="Polsky I."/>
            <person name="Bloom A."/>
            <person name="Freedman R."/>
            <person name="Mulkins M."/>
            <person name="Bhakta S."/>
            <person name="McCarley D."/>
            <person name="Wiesent L."/>
            <person name="Wong B."/>
            <person name="Jarnagin K."/>
            <person name="Handel T.M."/>
        </authorList>
    </citation>
    <scope>FUNCTION</scope>
    <scope>HOMODIMERIZATION</scope>
    <scope>MUTAGENESIS OF PRO-31; VAL-32; THR-33 AND TYR-36</scope>
</reference>
<reference key="23">
    <citation type="journal article" date="1999" name="Biochemistry">
        <title>Identification of surface residues of the monocyte chemotactic protein 1 that affect signaling through the receptor CCR2.</title>
        <authorList>
            <person name="Jarnagin K."/>
            <person name="Grunberger D."/>
            <person name="Mulkins M."/>
            <person name="Wong B."/>
            <person name="Hemmerich S."/>
            <person name="Paavola C."/>
            <person name="Bloom A."/>
            <person name="Bhakta S."/>
            <person name="Diehl F."/>
            <person name="Freedman R."/>
            <person name="McCarley D."/>
            <person name="Polsky I."/>
            <person name="Ping-Tsou A."/>
            <person name="Kosaka A."/>
            <person name="Handel T.M."/>
        </authorList>
    </citation>
    <scope>FUNCTION</scope>
    <scope>MUTAGENESIS OF 25-PRO--PRO-31; ASP-26; ILE-28; ASN-29; PRO-31; VAL-32 AND THR-33</scope>
</reference>
<reference key="24">
    <citation type="journal article" date="1999" name="Biochemistry">
        <title>Identification of residues in the monocyte chemotactic protein-1 that contact the MCP-1 receptor, CCR2.</title>
        <authorList>
            <person name="Hemmerich S."/>
            <person name="Paavola C."/>
            <person name="Bloom A."/>
            <person name="Bhakta S."/>
            <person name="Freedman R."/>
            <person name="Grunberger D."/>
            <person name="Krstenansky J."/>
            <person name="Lee S."/>
            <person name="McCarley D."/>
            <person name="Mulkins M."/>
            <person name="Wong B."/>
            <person name="Pease J."/>
            <person name="Mizoue L."/>
            <person name="Mirzadegan T."/>
            <person name="Polsky I."/>
            <person name="Thompson K."/>
            <person name="Handel T.M."/>
            <person name="Jarnagin K."/>
        </authorList>
    </citation>
    <scope>FUNCTION</scope>
    <scope>IMPORTANCE OF TYR-36; ARG-47; LYS-58; LYS-61 AND LYS-72 FOR RECEPTOR BINDING</scope>
    <scope>MUTAGENESIS</scope>
</reference>
<reference key="25">
    <citation type="journal article" date="2004" name="J. Biol. Chem.">
        <title>Identification of the glycosaminoglycan binding site of the CC chemokine, MCP-1: implications for structure and function in vivo.</title>
        <authorList>
            <person name="Lau E.K."/>
            <person name="Paavola C.D."/>
            <person name="Johnson Z."/>
            <person name="Gaudry J.-P."/>
            <person name="Geretti E."/>
            <person name="Borlat F."/>
            <person name="Kungl A.J."/>
            <person name="Proudfoot A.E."/>
            <person name="Handel T.M."/>
        </authorList>
    </citation>
    <scope>GAG BINDING SITES ARG-41; LYS-42 AND ARG-47</scope>
    <scope>MUTAGENESIS</scope>
    <scope>SUBUNIT</scope>
</reference>
<reference key="26">
    <citation type="journal article" date="2013" name="J. Lipid Res.">
        <title>Fat-specific protein 27 modulates nuclear factor of activated T cells 5 and the cellular response to stress.</title>
        <authorList>
            <person name="Ueno M."/>
            <person name="Shen W.J."/>
            <person name="Patel S."/>
            <person name="Greenberg A.S."/>
            <person name="Azhar S."/>
            <person name="Kraemer F.B."/>
        </authorList>
    </citation>
    <scope>INDUCTION BY OSMOTIC STRESS</scope>
</reference>
<reference key="27">
    <citation type="journal article" date="2013" name="Nat. Med.">
        <title>Activation of the Nlrp3 inflammasome in infiltrating macrophages by endocannabinoids mediates beta cell loss in type 2 diabetes.</title>
        <authorList>
            <person name="Jourdan T."/>
            <person name="Godlewski G."/>
            <person name="Cinar R."/>
            <person name="Bertola A."/>
            <person name="Szanda G."/>
            <person name="Liu J."/>
            <person name="Tam J."/>
            <person name="Han T."/>
            <person name="Mukhopadhyay B."/>
            <person name="Skarulis M.C."/>
            <person name="Ju C."/>
            <person name="Aouadi M."/>
            <person name="Czech M.P."/>
            <person name="Kunos G."/>
        </authorList>
    </citation>
    <scope>SUBCELLULAR LOCATION</scope>
    <scope>INDUCTION BY IL1B</scope>
</reference>
<reference key="28">
    <citation type="journal article" date="2014" name="J. Cell. Physiol.">
        <title>A role for the chemokine receptor CCR6 in mammalian sperm motility and chemotaxis.</title>
        <authorList>
            <person name="Caballero-Campo P."/>
            <person name="Buffone M.G."/>
            <person name="Benencia F."/>
            <person name="Conejo-Garcia J.R."/>
            <person name="Rinaudo P.F."/>
            <person name="Gerton G.L."/>
        </authorList>
    </citation>
    <scope>TISSUE SPECIFICITY</scope>
</reference>
<reference key="29">
    <citation type="journal article" date="2018" name="Front. Pharmacol.">
        <title>TAK-442, a Direct Factor Xa Inhibitor, Inhibits Monocyte Chemoattractant Protein 1 Production in Endothelial Cells via Involvement of Protease-Activated Receptor 1.</title>
        <authorList>
            <person name="Shinozawa E."/>
            <person name="Nakayama M."/>
            <person name="Imura Y."/>
        </authorList>
    </citation>
    <scope>INDUCTION BY F10 AND F2</scope>
</reference>
<reference key="30">
    <citation type="journal article" date="2021" name="Cells">
        <title>Coagulation Factor Xa Induces Proinflammatory Responses in Cardiac Fibroblasts via Activation of Protease-Activated Receptor-1.</title>
        <authorList>
            <person name="D'Alessandro E."/>
            <person name="Scaf B."/>
            <person name="Munts C."/>
            <person name="van Hunnik A."/>
            <person name="Trevelyan C.J."/>
            <person name="Verheule S."/>
            <person name="Spronk H.M.H."/>
            <person name="Turner N.A."/>
            <person name="Ten Cate H."/>
            <person name="Schotten U."/>
            <person name="van Nieuwenhoven F.A."/>
        </authorList>
    </citation>
    <scope>INDUCTION BY F10</scope>
</reference>
<reference key="31">
    <citation type="journal article" date="1991" name="Protein Eng.">
        <title>Modeling the three-dimensional structure of the monocyte chemo-attractant and activating protein MCAF/MCP-1 on the basis of the solution structure of interleukin-8.</title>
        <authorList>
            <person name="Gronenborn A.M."/>
            <person name="Clore G.M."/>
        </authorList>
    </citation>
    <scope>3D-STRUCTURE MODELING</scope>
</reference>
<reference key="32">
    <citation type="journal article" date="1996" name="Biochemistry">
        <title>Heteronuclear (1H, 13C, 15N) NMR assignments and solution structure of the monocyte chemoattractant protein-1 (MCP-1) dimer.</title>
        <authorList>
            <person name="Handel T.M."/>
            <person name="Domaille P.J."/>
        </authorList>
    </citation>
    <scope>STRUCTURE BY NMR</scope>
</reference>
<reference key="33">
    <citation type="journal article" date="1997" name="Nat. Struct. Biol.">
        <title>The structure of MCP-1 in two crystal forms provides a rare example of variable quaternary interactions.</title>
        <authorList>
            <person name="Lubkowski J."/>
            <person name="Bujacz G."/>
            <person name="Domaille P.J."/>
            <person name="Handel T.M."/>
            <person name="Wlodawer A."/>
        </authorList>
    </citation>
    <scope>X-RAY CRYSTALLOGRAPHY (1.85 ANGSTROMS)</scope>
    <scope>SUBUNIT</scope>
</reference>
<reference key="34">
    <citation type="journal article" date="2005" name="J. Exp. Med.">
        <title>A functional promoter polymorphism in monocyte chemoattractant protein-1 is associated with increased susceptibility to pulmonary tuberculosis.</title>
        <authorList>
            <person name="Flores-Villanueva P.O."/>
            <person name="Ruiz-Morales J.A."/>
            <person name="Song C.-H."/>
            <person name="Flores L.M."/>
            <person name="Jo E.-K."/>
            <person name="Montano M."/>
            <person name="Barnes P.F."/>
            <person name="Selman M."/>
            <person name="Granados J."/>
        </authorList>
    </citation>
    <scope>INVOLVEMENT IN MYCOBACTERIUM TUBERCULOSIS SUSCEPTIBILITY</scope>
</reference>
<reference key="35">
    <citation type="journal article" date="2016" name="J. Biol. Chem.">
        <title>The Anti-inflammatory Protein TSG-6 Regulates Chemokine Function by Inhibiting Chemokine/Glycosaminoglycan Interactions.</title>
        <authorList>
            <person name="Dyer D.P."/>
            <person name="Salanga C.L."/>
            <person name="Johns S.C."/>
            <person name="Valdambrini E."/>
            <person name="Fuster M.M."/>
            <person name="Milner C.M."/>
            <person name="Day A.J."/>
            <person name="Handel T.M."/>
        </authorList>
    </citation>
    <scope>INTERACTION WITH TNFAIP6</scope>
    <scope>MUTAGENESIS OF 41-ARG-LYS-42</scope>
</reference>
<proteinExistence type="evidence at protein level"/>
<protein>
    <recommendedName>
        <fullName>C-C motif chemokine 2</fullName>
    </recommendedName>
    <alternativeName>
        <fullName>HC11</fullName>
    </alternativeName>
    <alternativeName>
        <fullName>Monocyte chemoattractant protein 1</fullName>
    </alternativeName>
    <alternativeName>
        <fullName>Monocyte chemotactic and activating factor</fullName>
        <shortName>MCAF</shortName>
    </alternativeName>
    <alternativeName>
        <fullName>Monocyte chemotactic protein 1</fullName>
        <shortName>MCP-1</shortName>
    </alternativeName>
    <alternativeName>
        <fullName>Monocyte secretory protein JE</fullName>
    </alternativeName>
    <alternativeName>
        <fullName>Small-inducible cytokine A2</fullName>
    </alternativeName>
</protein>